<name>DSBB1_BURL3</name>
<feature type="chain" id="PRO_0000298348" description="Disulfide bond formation protein B 1">
    <location>
        <begin position="1"/>
        <end position="170"/>
    </location>
</feature>
<feature type="topological domain" description="Cytoplasmic" evidence="1">
    <location>
        <begin position="1"/>
        <end position="14"/>
    </location>
</feature>
<feature type="transmembrane region" description="Helical" evidence="1">
    <location>
        <begin position="15"/>
        <end position="31"/>
    </location>
</feature>
<feature type="topological domain" description="Periplasmic" evidence="1">
    <location>
        <begin position="32"/>
        <end position="49"/>
    </location>
</feature>
<feature type="transmembrane region" description="Helical" evidence="1">
    <location>
        <begin position="50"/>
        <end position="64"/>
    </location>
</feature>
<feature type="topological domain" description="Cytoplasmic" evidence="1">
    <location>
        <begin position="65"/>
        <end position="71"/>
    </location>
</feature>
<feature type="transmembrane region" description="Helical" evidence="1">
    <location>
        <begin position="72"/>
        <end position="89"/>
    </location>
</feature>
<feature type="topological domain" description="Periplasmic" evidence="1">
    <location>
        <begin position="90"/>
        <end position="144"/>
    </location>
</feature>
<feature type="transmembrane region" description="Helical" evidence="1">
    <location>
        <begin position="145"/>
        <end position="163"/>
    </location>
</feature>
<feature type="topological domain" description="Cytoplasmic" evidence="1">
    <location>
        <begin position="164"/>
        <end position="170"/>
    </location>
</feature>
<feature type="disulfide bond" description="Redox-active" evidence="1">
    <location>
        <begin position="41"/>
        <end position="44"/>
    </location>
</feature>
<feature type="disulfide bond" description="Redox-active" evidence="1">
    <location>
        <begin position="102"/>
        <end position="130"/>
    </location>
</feature>
<comment type="function">
    <text evidence="1">Required for disulfide bond formation in some periplasmic proteins. Acts by oxidizing the DsbA protein.</text>
</comment>
<comment type="subcellular location">
    <subcellularLocation>
        <location evidence="1">Cell inner membrane</location>
        <topology evidence="1">Multi-pass membrane protein</topology>
    </subcellularLocation>
</comment>
<comment type="similarity">
    <text evidence="1">Belongs to the DsbB family.</text>
</comment>
<gene>
    <name evidence="1" type="primary">dsbB1</name>
    <name type="ordered locus">Bcep18194_A4133</name>
</gene>
<dbReference type="EMBL" id="CP000151">
    <property type="protein sequence ID" value="ABB07730.1"/>
    <property type="molecule type" value="Genomic_DNA"/>
</dbReference>
<dbReference type="RefSeq" id="WP_011351308.1">
    <property type="nucleotide sequence ID" value="NZ_WNDV01000014.1"/>
</dbReference>
<dbReference type="SMR" id="Q39II6"/>
<dbReference type="GeneID" id="45094033"/>
<dbReference type="KEGG" id="bur:Bcep18194_A4133"/>
<dbReference type="PATRIC" id="fig|482957.22.peg.1019"/>
<dbReference type="HOGENOM" id="CLU_098660_1_0_4"/>
<dbReference type="Proteomes" id="UP000002705">
    <property type="component" value="Chromosome 1"/>
</dbReference>
<dbReference type="GO" id="GO:0005886">
    <property type="term" value="C:plasma membrane"/>
    <property type="evidence" value="ECO:0007669"/>
    <property type="project" value="UniProtKB-SubCell"/>
</dbReference>
<dbReference type="GO" id="GO:0009055">
    <property type="term" value="F:electron transfer activity"/>
    <property type="evidence" value="ECO:0007669"/>
    <property type="project" value="UniProtKB-UniRule"/>
</dbReference>
<dbReference type="GO" id="GO:0015035">
    <property type="term" value="F:protein-disulfide reductase activity"/>
    <property type="evidence" value="ECO:0007669"/>
    <property type="project" value="UniProtKB-UniRule"/>
</dbReference>
<dbReference type="GO" id="GO:0006457">
    <property type="term" value="P:protein folding"/>
    <property type="evidence" value="ECO:0007669"/>
    <property type="project" value="InterPro"/>
</dbReference>
<dbReference type="Gene3D" id="1.20.1550.10">
    <property type="entry name" value="DsbB-like"/>
    <property type="match status" value="1"/>
</dbReference>
<dbReference type="HAMAP" id="MF_00286">
    <property type="entry name" value="DsbB"/>
    <property type="match status" value="1"/>
</dbReference>
<dbReference type="InterPro" id="IPR003752">
    <property type="entry name" value="DiS_bond_form_DsbB/BdbC"/>
</dbReference>
<dbReference type="InterPro" id="IPR022920">
    <property type="entry name" value="Disulphide_bond_form_DsbB"/>
</dbReference>
<dbReference type="InterPro" id="IPR050183">
    <property type="entry name" value="DsbB"/>
</dbReference>
<dbReference type="InterPro" id="IPR023380">
    <property type="entry name" value="DsbB-like_sf"/>
</dbReference>
<dbReference type="NCBIfam" id="NF002552">
    <property type="entry name" value="PRK02110.1"/>
    <property type="match status" value="1"/>
</dbReference>
<dbReference type="PANTHER" id="PTHR36570">
    <property type="entry name" value="DISULFIDE BOND FORMATION PROTEIN B"/>
    <property type="match status" value="1"/>
</dbReference>
<dbReference type="PANTHER" id="PTHR36570:SF3">
    <property type="entry name" value="DISULFIDE BOND FORMATION PROTEIN B"/>
    <property type="match status" value="1"/>
</dbReference>
<dbReference type="Pfam" id="PF02600">
    <property type="entry name" value="DsbB"/>
    <property type="match status" value="1"/>
</dbReference>
<dbReference type="SUPFAM" id="SSF158442">
    <property type="entry name" value="DsbB-like"/>
    <property type="match status" value="1"/>
</dbReference>
<organism>
    <name type="scientific">Burkholderia lata (strain ATCC 17760 / DSM 23089 / LMG 22485 / NCIMB 9086 / R18194 / 383)</name>
    <dbReference type="NCBI Taxonomy" id="482957"/>
    <lineage>
        <taxon>Bacteria</taxon>
        <taxon>Pseudomonadati</taxon>
        <taxon>Pseudomonadota</taxon>
        <taxon>Betaproteobacteria</taxon>
        <taxon>Burkholderiales</taxon>
        <taxon>Burkholderiaceae</taxon>
        <taxon>Burkholderia</taxon>
        <taxon>Burkholderia cepacia complex</taxon>
    </lineage>
</organism>
<proteinExistence type="inferred from homology"/>
<protein>
    <recommendedName>
        <fullName evidence="1">Disulfide bond formation protein B 1</fullName>
    </recommendedName>
    <alternativeName>
        <fullName evidence="1">Disulfide oxidoreductase 1</fullName>
    </alternativeName>
</protein>
<accession>Q39II6</accession>
<reference key="1">
    <citation type="submission" date="2005-10" db="EMBL/GenBank/DDBJ databases">
        <title>Complete sequence of chromosome 1 of Burkholderia sp. 383.</title>
        <authorList>
            <consortium name="US DOE Joint Genome Institute"/>
            <person name="Copeland A."/>
            <person name="Lucas S."/>
            <person name="Lapidus A."/>
            <person name="Barry K."/>
            <person name="Detter J.C."/>
            <person name="Glavina T."/>
            <person name="Hammon N."/>
            <person name="Israni S."/>
            <person name="Pitluck S."/>
            <person name="Chain P."/>
            <person name="Malfatti S."/>
            <person name="Shin M."/>
            <person name="Vergez L."/>
            <person name="Schmutz J."/>
            <person name="Larimer F."/>
            <person name="Land M."/>
            <person name="Kyrpides N."/>
            <person name="Lykidis A."/>
            <person name="Richardson P."/>
        </authorList>
    </citation>
    <scope>NUCLEOTIDE SEQUENCE [LARGE SCALE GENOMIC DNA]</scope>
    <source>
        <strain>ATCC 17760 / DSM 23089 / LMG 22485 / NCIMB 9086 / R18194 / 383</strain>
    </source>
</reference>
<sequence length="170" mass="18822">MNDYTLAIRRERRLLMLLGWVCIALLAGALYLQYVKNEDPCPLCIIQRYFFCAIGIFAFLAAGIRNWRGVWVLELLIAIAAAGGVGTAARHLTIQMNPGFSCGFDTLQPIVDSLPPAQWFPGMFKVAGLCETVYPPIFGILLPGWSLIGFAVILIAVVASLWRHRRKLVG</sequence>
<evidence type="ECO:0000255" key="1">
    <source>
        <dbReference type="HAMAP-Rule" id="MF_00286"/>
    </source>
</evidence>
<keyword id="KW-0997">Cell inner membrane</keyword>
<keyword id="KW-1003">Cell membrane</keyword>
<keyword id="KW-0143">Chaperone</keyword>
<keyword id="KW-1015">Disulfide bond</keyword>
<keyword id="KW-0249">Electron transport</keyword>
<keyword id="KW-0472">Membrane</keyword>
<keyword id="KW-0560">Oxidoreductase</keyword>
<keyword id="KW-0676">Redox-active center</keyword>
<keyword id="KW-0812">Transmembrane</keyword>
<keyword id="KW-1133">Transmembrane helix</keyword>
<keyword id="KW-0813">Transport</keyword>